<sequence length="300" mass="32171">MAPSQLPPMFNPTPQDIEMLLAAQCHLGSKNLQVHMEPYLWKTRPDGVNVINIGKTWEKILLAARIIAAIDNPADICVISARPYGQRAVLKFASHTGATAIAGRFTPGNFTNYITRSFKEPRLIIVTDPRTDAQAIKEASYVNIPVIALCDTDSPTDFVDVAIPTNNKGRHSIGLVWWLLAREVLRLRGTLASREAEWDVVVDLYFYRDPEAEENKEIAEEAKVPGADEIGAGAVESGFAGENWETQAPGAGVPGTAFAAASAAGATSWEADGADWAASSAAAPAESWAAEAQGAEGAKW</sequence>
<accession>Q0CQF6</accession>
<organism>
    <name type="scientific">Aspergillus terreus (strain NIH 2624 / FGSC A1156)</name>
    <dbReference type="NCBI Taxonomy" id="341663"/>
    <lineage>
        <taxon>Eukaryota</taxon>
        <taxon>Fungi</taxon>
        <taxon>Dikarya</taxon>
        <taxon>Ascomycota</taxon>
        <taxon>Pezizomycotina</taxon>
        <taxon>Eurotiomycetes</taxon>
        <taxon>Eurotiomycetidae</taxon>
        <taxon>Eurotiales</taxon>
        <taxon>Aspergillaceae</taxon>
        <taxon>Aspergillus</taxon>
        <taxon>Aspergillus subgen. Circumdati</taxon>
    </lineage>
</organism>
<gene>
    <name type="primary">rps0</name>
    <name type="ORF">ATEG_04078</name>
</gene>
<keyword id="KW-0963">Cytoplasm</keyword>
<keyword id="KW-1185">Reference proteome</keyword>
<keyword id="KW-0687">Ribonucleoprotein</keyword>
<keyword id="KW-0689">Ribosomal protein</keyword>
<feature type="chain" id="PRO_0000371623" description="Small ribosomal subunit protein uS2">
    <location>
        <begin position="1"/>
        <end position="300"/>
    </location>
</feature>
<feature type="region of interest" description="Disordered" evidence="2">
    <location>
        <begin position="269"/>
        <end position="300"/>
    </location>
</feature>
<proteinExistence type="inferred from homology"/>
<evidence type="ECO:0000255" key="1">
    <source>
        <dbReference type="HAMAP-Rule" id="MF_03015"/>
    </source>
</evidence>
<evidence type="ECO:0000256" key="2">
    <source>
        <dbReference type="SAM" id="MobiDB-lite"/>
    </source>
</evidence>
<evidence type="ECO:0000305" key="3"/>
<reference key="1">
    <citation type="submission" date="2005-09" db="EMBL/GenBank/DDBJ databases">
        <title>Annotation of the Aspergillus terreus NIH2624 genome.</title>
        <authorList>
            <person name="Birren B.W."/>
            <person name="Lander E.S."/>
            <person name="Galagan J.E."/>
            <person name="Nusbaum C."/>
            <person name="Devon K."/>
            <person name="Henn M."/>
            <person name="Ma L.-J."/>
            <person name="Jaffe D.B."/>
            <person name="Butler J."/>
            <person name="Alvarez P."/>
            <person name="Gnerre S."/>
            <person name="Grabherr M."/>
            <person name="Kleber M."/>
            <person name="Mauceli E.W."/>
            <person name="Brockman W."/>
            <person name="Rounsley S."/>
            <person name="Young S.K."/>
            <person name="LaButti K."/>
            <person name="Pushparaj V."/>
            <person name="DeCaprio D."/>
            <person name="Crawford M."/>
            <person name="Koehrsen M."/>
            <person name="Engels R."/>
            <person name="Montgomery P."/>
            <person name="Pearson M."/>
            <person name="Howarth C."/>
            <person name="Larson L."/>
            <person name="Luoma S."/>
            <person name="White J."/>
            <person name="Alvarado L."/>
            <person name="Kodira C.D."/>
            <person name="Zeng Q."/>
            <person name="Oleary S."/>
            <person name="Yandava C."/>
            <person name="Denning D.W."/>
            <person name="Nierman W.C."/>
            <person name="Milne T."/>
            <person name="Madden K."/>
        </authorList>
    </citation>
    <scope>NUCLEOTIDE SEQUENCE [LARGE SCALE GENOMIC DNA]</scope>
    <source>
        <strain>NIH 2624 / FGSC A1156</strain>
    </source>
</reference>
<name>RSSA_ASPTN</name>
<comment type="function">
    <text evidence="1">Required for the assembly and/or stability of the 40S ribosomal subunit. Required for the processing of the 20S rRNA-precursor to mature 18S rRNA in a late step of the maturation of 40S ribosomal subunits.</text>
</comment>
<comment type="subunit">
    <text evidence="1">Component of the small ribosomal subunit. Mature ribosomes consist of a small (40S) and a large (60S) subunit. The 40S subunit contains about 33 different proteins and 1 molecule of RNA (18S). The 60S subunit contains about 49 different proteins and 3 molecules of RNA (25S, 5.8S and 5S). Interacts with rps21.</text>
</comment>
<comment type="subcellular location">
    <subcellularLocation>
        <location evidence="1">Cytoplasm</location>
    </subcellularLocation>
</comment>
<comment type="similarity">
    <text evidence="1">Belongs to the universal ribosomal protein uS2 family.</text>
</comment>
<dbReference type="EMBL" id="CH476598">
    <property type="protein sequence ID" value="EAU35880.1"/>
    <property type="molecule type" value="Genomic_DNA"/>
</dbReference>
<dbReference type="RefSeq" id="XP_001213256.1">
    <property type="nucleotide sequence ID" value="XM_001213256.1"/>
</dbReference>
<dbReference type="SMR" id="Q0CQF6"/>
<dbReference type="STRING" id="341663.Q0CQF6"/>
<dbReference type="EnsemblFungi" id="EAU35880">
    <property type="protein sequence ID" value="EAU35880"/>
    <property type="gene ID" value="ATEG_04078"/>
</dbReference>
<dbReference type="GeneID" id="4318457"/>
<dbReference type="VEuPathDB" id="FungiDB:ATEG_04078"/>
<dbReference type="eggNOG" id="KOG0830">
    <property type="taxonomic scope" value="Eukaryota"/>
</dbReference>
<dbReference type="HOGENOM" id="CLU_058171_0_1_1"/>
<dbReference type="OMA" id="VKNFFEP"/>
<dbReference type="OrthoDB" id="414863at2759"/>
<dbReference type="Proteomes" id="UP000007963">
    <property type="component" value="Unassembled WGS sequence"/>
</dbReference>
<dbReference type="GO" id="GO:0022627">
    <property type="term" value="C:cytosolic small ribosomal subunit"/>
    <property type="evidence" value="ECO:0007669"/>
    <property type="project" value="UniProtKB-UniRule"/>
</dbReference>
<dbReference type="GO" id="GO:0003735">
    <property type="term" value="F:structural constituent of ribosome"/>
    <property type="evidence" value="ECO:0007669"/>
    <property type="project" value="UniProtKB-UniRule"/>
</dbReference>
<dbReference type="GO" id="GO:0000028">
    <property type="term" value="P:ribosomal small subunit assembly"/>
    <property type="evidence" value="ECO:0007669"/>
    <property type="project" value="UniProtKB-UniRule"/>
</dbReference>
<dbReference type="GO" id="GO:0006412">
    <property type="term" value="P:translation"/>
    <property type="evidence" value="ECO:0007669"/>
    <property type="project" value="UniProtKB-UniRule"/>
</dbReference>
<dbReference type="CDD" id="cd01425">
    <property type="entry name" value="RPS2"/>
    <property type="match status" value="1"/>
</dbReference>
<dbReference type="FunFam" id="3.40.50.10490:FF:000010">
    <property type="entry name" value="40S ribosomal protein S0"/>
    <property type="match status" value="1"/>
</dbReference>
<dbReference type="Gene3D" id="3.40.50.10490">
    <property type="entry name" value="Glucose-6-phosphate isomerase like protein, domain 1"/>
    <property type="match status" value="1"/>
</dbReference>
<dbReference type="HAMAP" id="MF_03015">
    <property type="entry name" value="Ribosomal_S2_euk"/>
    <property type="match status" value="1"/>
</dbReference>
<dbReference type="InterPro" id="IPR001865">
    <property type="entry name" value="Ribosomal_uS2"/>
</dbReference>
<dbReference type="InterPro" id="IPR032281">
    <property type="entry name" value="Ribosomal_uS2_C"/>
</dbReference>
<dbReference type="InterPro" id="IPR018130">
    <property type="entry name" value="Ribosomal_uS2_CS"/>
</dbReference>
<dbReference type="InterPro" id="IPR027498">
    <property type="entry name" value="Ribosomal_uS2_euk"/>
</dbReference>
<dbReference type="InterPro" id="IPR005707">
    <property type="entry name" value="Ribosomal_uS2_euk/arc"/>
</dbReference>
<dbReference type="InterPro" id="IPR023591">
    <property type="entry name" value="Ribosomal_uS2_flav_dom_sf"/>
</dbReference>
<dbReference type="NCBIfam" id="TIGR01012">
    <property type="entry name" value="uS2_euk_arch"/>
    <property type="match status" value="1"/>
</dbReference>
<dbReference type="PANTHER" id="PTHR11489">
    <property type="entry name" value="40S RIBOSOMAL PROTEIN SA"/>
    <property type="match status" value="1"/>
</dbReference>
<dbReference type="Pfam" id="PF16122">
    <property type="entry name" value="40S_SA_C"/>
    <property type="match status" value="1"/>
</dbReference>
<dbReference type="Pfam" id="PF00318">
    <property type="entry name" value="Ribosomal_S2"/>
    <property type="match status" value="2"/>
</dbReference>
<dbReference type="PRINTS" id="PR00395">
    <property type="entry name" value="RIBOSOMALS2"/>
</dbReference>
<dbReference type="SUPFAM" id="SSF52313">
    <property type="entry name" value="Ribosomal protein S2"/>
    <property type="match status" value="1"/>
</dbReference>
<dbReference type="PROSITE" id="PS00963">
    <property type="entry name" value="RIBOSOMAL_S2_2"/>
    <property type="match status" value="1"/>
</dbReference>
<protein>
    <recommendedName>
        <fullName evidence="1">Small ribosomal subunit protein uS2</fullName>
    </recommendedName>
    <alternativeName>
        <fullName evidence="3">40S ribosomal protein S0</fullName>
    </alternativeName>
</protein>